<protein>
    <recommendedName>
        <fullName>Probable aquaporin PIP1-5</fullName>
        <shortName>AtPIP1;5</shortName>
    </recommendedName>
    <alternativeName>
        <fullName>Plasma membrane intrinsic protein 1d</fullName>
        <shortName>PIP1d</shortName>
    </alternativeName>
</protein>
<proteinExistence type="evidence at protein level"/>
<organism>
    <name type="scientific">Arabidopsis thaliana</name>
    <name type="common">Mouse-ear cress</name>
    <dbReference type="NCBI Taxonomy" id="3702"/>
    <lineage>
        <taxon>Eukaryota</taxon>
        <taxon>Viridiplantae</taxon>
        <taxon>Streptophyta</taxon>
        <taxon>Embryophyta</taxon>
        <taxon>Tracheophyta</taxon>
        <taxon>Spermatophyta</taxon>
        <taxon>Magnoliopsida</taxon>
        <taxon>eudicotyledons</taxon>
        <taxon>Gunneridae</taxon>
        <taxon>Pentapetalae</taxon>
        <taxon>rosids</taxon>
        <taxon>malvids</taxon>
        <taxon>Brassicales</taxon>
        <taxon>Brassicaceae</taxon>
        <taxon>Camelineae</taxon>
        <taxon>Arabidopsis</taxon>
    </lineage>
</organism>
<sequence length="287" mass="30647">MEGKEEDVNVGANKFPERQPIGTAAQTESKDYKEPPPAPFFEPGELKSWSFYRAGIAEFIATFLFLYVTVLTVMGVKRAPNMCASVGIQGIAWAFGGMIFALVYCTAGISGGHINPAVTFGLFLARKLSLTRALFYIVMQCLGAICGAGVVKGFQPGLYQTNGGGANVVAHGYTKGSGLGAEIVGTFVLVYTVFSATDAKRSARDSHVPILAPLPIGFAVFLVHLATIPITGTGINPARSLGAAIIYNKDHAWDDHWIFWVGPFIGAALAALYHQIVIRAIPFKSKT</sequence>
<comment type="function">
    <text evidence="1">Aquaporins facilitate the transport of water and small neutral solutes across cell membranes.</text>
</comment>
<comment type="interaction">
    <interactant intactId="EBI-4440607">
        <id>Q8LAA6</id>
    </interactant>
    <interactant intactId="EBI-4431139">
        <id>P30302</id>
        <label>PIP2-3</label>
    </interactant>
    <organismsDiffer>false</organismsDiffer>
    <experiments>3</experiments>
</comment>
<comment type="interaction">
    <interactant intactId="EBI-4440607">
        <id>Q8LAA6</id>
    </interactant>
    <interactant intactId="EBI-4434233">
        <id>P93004</id>
        <label>PIP2-7</label>
    </interactant>
    <organismsDiffer>false</organismsDiffer>
    <experiments>3</experiments>
</comment>
<comment type="subcellular location">
    <subcellularLocation>
        <location evidence="7">Cell membrane</location>
        <topology evidence="4">Multi-pass membrane protein</topology>
    </subcellularLocation>
</comment>
<comment type="tissue specificity">
    <text evidence="6">Predominantly expressed in green siliques. Also expressed above ground, in roots and flower buds.</text>
</comment>
<comment type="domain">
    <text>Aquaporins contain two tandem repeats each containing three membrane-spanning domains and a pore-forming loop with the signature motif Asn-Pro-Ala (NPA).</text>
</comment>
<comment type="similarity">
    <text evidence="8">Belongs to the MIP/aquaporin (TC 1.A.8) family. PIP (TC 1.A.8.11) subfamily.</text>
</comment>
<feature type="chain" id="PRO_0000064050" description="Probable aquaporin PIP1-5">
    <location>
        <begin position="1"/>
        <end position="287"/>
    </location>
</feature>
<feature type="topological domain" description="Cytoplasmic" evidence="4">
    <location>
        <begin position="1"/>
        <end position="55"/>
    </location>
</feature>
<feature type="transmembrane region" description="Helical; Name=1" evidence="4">
    <location>
        <begin position="56"/>
        <end position="76"/>
    </location>
</feature>
<feature type="topological domain" description="Extracellular" evidence="4">
    <location>
        <begin position="77"/>
        <end position="92"/>
    </location>
</feature>
<feature type="transmembrane region" description="Helical; Name=2" evidence="4">
    <location>
        <begin position="93"/>
        <end position="113"/>
    </location>
</feature>
<feature type="topological domain" description="Cytoplasmic" evidence="4">
    <location>
        <begin position="114"/>
        <end position="133"/>
    </location>
</feature>
<feature type="transmembrane region" description="Helical; Name=3" evidence="4">
    <location>
        <begin position="134"/>
        <end position="154"/>
    </location>
</feature>
<feature type="topological domain" description="Extracellular" evidence="4">
    <location>
        <begin position="155"/>
        <end position="175"/>
    </location>
</feature>
<feature type="transmembrane region" description="Helical; Name=4" evidence="4">
    <location>
        <begin position="176"/>
        <end position="196"/>
    </location>
</feature>
<feature type="topological domain" description="Cytoplasmic" evidence="4">
    <location>
        <begin position="197"/>
        <end position="209"/>
    </location>
</feature>
<feature type="transmembrane region" description="Helical; Name=5" evidence="4">
    <location>
        <begin position="210"/>
        <end position="230"/>
    </location>
</feature>
<feature type="topological domain" description="Extracellular" evidence="4">
    <location>
        <begin position="231"/>
        <end position="257"/>
    </location>
</feature>
<feature type="transmembrane region" description="Helical; Name=6" evidence="4">
    <location>
        <begin position="258"/>
        <end position="278"/>
    </location>
</feature>
<feature type="topological domain" description="Cytoplasmic" evidence="4">
    <location>
        <begin position="279"/>
        <end position="287"/>
    </location>
</feature>
<feature type="region of interest" description="Disordered" evidence="5">
    <location>
        <begin position="1"/>
        <end position="34"/>
    </location>
</feature>
<feature type="short sequence motif" description="NPA 1">
    <location>
        <begin position="115"/>
        <end position="117"/>
    </location>
</feature>
<feature type="short sequence motif" description="NPA 2">
    <location>
        <begin position="236"/>
        <end position="238"/>
    </location>
</feature>
<feature type="modified residue" description="N-acetylmethionine" evidence="3">
    <location>
        <position position="1"/>
    </location>
</feature>
<feature type="modified residue" description="Phosphoserine" evidence="2">
    <location>
        <position position="285"/>
    </location>
</feature>
<feature type="sequence conflict" description="In Ref. 4; AAM65493." evidence="8" ref="4">
    <original>C</original>
    <variation>S</variation>
    <location>
        <position position="141"/>
    </location>
</feature>
<feature type="sequence conflict" description="In Ref. 4; AAM65493." evidence="8" ref="4">
    <original>P</original>
    <variation>R</variation>
    <location>
        <position position="209"/>
    </location>
</feature>
<reference key="1">
    <citation type="journal article" date="1999" name="Nature">
        <title>Sequence and analysis of chromosome 4 of the plant Arabidopsis thaliana.</title>
        <authorList>
            <person name="Mayer K.F.X."/>
            <person name="Schueller C."/>
            <person name="Wambutt R."/>
            <person name="Murphy G."/>
            <person name="Volckaert G."/>
            <person name="Pohl T."/>
            <person name="Duesterhoeft A."/>
            <person name="Stiekema W."/>
            <person name="Entian K.-D."/>
            <person name="Terryn N."/>
            <person name="Harris B."/>
            <person name="Ansorge W."/>
            <person name="Brandt P."/>
            <person name="Grivell L.A."/>
            <person name="Rieger M."/>
            <person name="Weichselgartner M."/>
            <person name="de Simone V."/>
            <person name="Obermaier B."/>
            <person name="Mache R."/>
            <person name="Mueller M."/>
            <person name="Kreis M."/>
            <person name="Delseny M."/>
            <person name="Puigdomenech P."/>
            <person name="Watson M."/>
            <person name="Schmidtheini T."/>
            <person name="Reichert B."/>
            <person name="Portetelle D."/>
            <person name="Perez-Alonso M."/>
            <person name="Boutry M."/>
            <person name="Bancroft I."/>
            <person name="Vos P."/>
            <person name="Hoheisel J."/>
            <person name="Zimmermann W."/>
            <person name="Wedler H."/>
            <person name="Ridley P."/>
            <person name="Langham S.-A."/>
            <person name="McCullagh B."/>
            <person name="Bilham L."/>
            <person name="Robben J."/>
            <person name="van der Schueren J."/>
            <person name="Grymonprez B."/>
            <person name="Chuang Y.-J."/>
            <person name="Vandenbussche F."/>
            <person name="Braeken M."/>
            <person name="Weltjens I."/>
            <person name="Voet M."/>
            <person name="Bastiaens I."/>
            <person name="Aert R."/>
            <person name="Defoor E."/>
            <person name="Weitzenegger T."/>
            <person name="Bothe G."/>
            <person name="Ramsperger U."/>
            <person name="Hilbert H."/>
            <person name="Braun M."/>
            <person name="Holzer E."/>
            <person name="Brandt A."/>
            <person name="Peters S."/>
            <person name="van Staveren M."/>
            <person name="Dirkse W."/>
            <person name="Mooijman P."/>
            <person name="Klein Lankhorst R."/>
            <person name="Rose M."/>
            <person name="Hauf J."/>
            <person name="Koetter P."/>
            <person name="Berneiser S."/>
            <person name="Hempel S."/>
            <person name="Feldpausch M."/>
            <person name="Lamberth S."/>
            <person name="Van den Daele H."/>
            <person name="De Keyser A."/>
            <person name="Buysshaert C."/>
            <person name="Gielen J."/>
            <person name="Villarroel R."/>
            <person name="De Clercq R."/>
            <person name="van Montagu M."/>
            <person name="Rogers J."/>
            <person name="Cronin A."/>
            <person name="Quail M.A."/>
            <person name="Bray-Allen S."/>
            <person name="Clark L."/>
            <person name="Doggett J."/>
            <person name="Hall S."/>
            <person name="Kay M."/>
            <person name="Lennard N."/>
            <person name="McLay K."/>
            <person name="Mayes R."/>
            <person name="Pettett A."/>
            <person name="Rajandream M.A."/>
            <person name="Lyne M."/>
            <person name="Benes V."/>
            <person name="Rechmann S."/>
            <person name="Borkova D."/>
            <person name="Bloecker H."/>
            <person name="Scharfe M."/>
            <person name="Grimm M."/>
            <person name="Loehnert T.-H."/>
            <person name="Dose S."/>
            <person name="de Haan M."/>
            <person name="Maarse A.C."/>
            <person name="Schaefer M."/>
            <person name="Mueller-Auer S."/>
            <person name="Gabel C."/>
            <person name="Fuchs M."/>
            <person name="Fartmann B."/>
            <person name="Granderath K."/>
            <person name="Dauner D."/>
            <person name="Herzl A."/>
            <person name="Neumann S."/>
            <person name="Argiriou A."/>
            <person name="Vitale D."/>
            <person name="Liguori R."/>
            <person name="Piravandi E."/>
            <person name="Massenet O."/>
            <person name="Quigley F."/>
            <person name="Clabauld G."/>
            <person name="Muendlein A."/>
            <person name="Felber R."/>
            <person name="Schnabl S."/>
            <person name="Hiller R."/>
            <person name="Schmidt W."/>
            <person name="Lecharny A."/>
            <person name="Aubourg S."/>
            <person name="Chefdor F."/>
            <person name="Cooke R."/>
            <person name="Berger C."/>
            <person name="Monfort A."/>
            <person name="Casacuberta E."/>
            <person name="Gibbons T."/>
            <person name="Weber N."/>
            <person name="Vandenbol M."/>
            <person name="Bargues M."/>
            <person name="Terol J."/>
            <person name="Torres A."/>
            <person name="Perez-Perez A."/>
            <person name="Purnelle B."/>
            <person name="Bent E."/>
            <person name="Johnson S."/>
            <person name="Tacon D."/>
            <person name="Jesse T."/>
            <person name="Heijnen L."/>
            <person name="Schwarz S."/>
            <person name="Scholler P."/>
            <person name="Heber S."/>
            <person name="Francs P."/>
            <person name="Bielke C."/>
            <person name="Frishman D."/>
            <person name="Haase D."/>
            <person name="Lemcke K."/>
            <person name="Mewes H.-W."/>
            <person name="Stocker S."/>
            <person name="Zaccaria P."/>
            <person name="Bevan M."/>
            <person name="Wilson R.K."/>
            <person name="de la Bastide M."/>
            <person name="Habermann K."/>
            <person name="Parnell L."/>
            <person name="Dedhia N."/>
            <person name="Gnoj L."/>
            <person name="Schutz K."/>
            <person name="Huang E."/>
            <person name="Spiegel L."/>
            <person name="Sekhon M."/>
            <person name="Murray J."/>
            <person name="Sheet P."/>
            <person name="Cordes M."/>
            <person name="Abu-Threideh J."/>
            <person name="Stoneking T."/>
            <person name="Kalicki J."/>
            <person name="Graves T."/>
            <person name="Harmon G."/>
            <person name="Edwards J."/>
            <person name="Latreille P."/>
            <person name="Courtney L."/>
            <person name="Cloud J."/>
            <person name="Abbott A."/>
            <person name="Scott K."/>
            <person name="Johnson D."/>
            <person name="Minx P."/>
            <person name="Bentley D."/>
            <person name="Fulton B."/>
            <person name="Miller N."/>
            <person name="Greco T."/>
            <person name="Kemp K."/>
            <person name="Kramer J."/>
            <person name="Fulton L."/>
            <person name="Mardis E."/>
            <person name="Dante M."/>
            <person name="Pepin K."/>
            <person name="Hillier L.W."/>
            <person name="Nelson J."/>
            <person name="Spieth J."/>
            <person name="Ryan E."/>
            <person name="Andrews S."/>
            <person name="Geisel C."/>
            <person name="Layman D."/>
            <person name="Du H."/>
            <person name="Ali J."/>
            <person name="Berghoff A."/>
            <person name="Jones K."/>
            <person name="Drone K."/>
            <person name="Cotton M."/>
            <person name="Joshu C."/>
            <person name="Antonoiu B."/>
            <person name="Zidanic M."/>
            <person name="Strong C."/>
            <person name="Sun H."/>
            <person name="Lamar B."/>
            <person name="Yordan C."/>
            <person name="Ma P."/>
            <person name="Zhong J."/>
            <person name="Preston R."/>
            <person name="Vil D."/>
            <person name="Shekher M."/>
            <person name="Matero A."/>
            <person name="Shah R."/>
            <person name="Swaby I.K."/>
            <person name="O'Shaughnessy A."/>
            <person name="Rodriguez M."/>
            <person name="Hoffman J."/>
            <person name="Till S."/>
            <person name="Granat S."/>
            <person name="Shohdy N."/>
            <person name="Hasegawa A."/>
            <person name="Hameed A."/>
            <person name="Lodhi M."/>
            <person name="Johnson A."/>
            <person name="Chen E."/>
            <person name="Marra M.A."/>
            <person name="Martienssen R."/>
            <person name="McCombie W.R."/>
        </authorList>
    </citation>
    <scope>NUCLEOTIDE SEQUENCE [LARGE SCALE GENOMIC DNA]</scope>
    <source>
        <strain>cv. Columbia</strain>
    </source>
</reference>
<reference key="2">
    <citation type="journal article" date="2017" name="Plant J.">
        <title>Araport11: a complete reannotation of the Arabidopsis thaliana reference genome.</title>
        <authorList>
            <person name="Cheng C.Y."/>
            <person name="Krishnakumar V."/>
            <person name="Chan A.P."/>
            <person name="Thibaud-Nissen F."/>
            <person name="Schobel S."/>
            <person name="Town C.D."/>
        </authorList>
    </citation>
    <scope>GENOME REANNOTATION</scope>
    <source>
        <strain>cv. Columbia</strain>
    </source>
</reference>
<reference key="3">
    <citation type="journal article" date="2003" name="Science">
        <title>Empirical analysis of transcriptional activity in the Arabidopsis genome.</title>
        <authorList>
            <person name="Yamada K."/>
            <person name="Lim J."/>
            <person name="Dale J.M."/>
            <person name="Chen H."/>
            <person name="Shinn P."/>
            <person name="Palm C.J."/>
            <person name="Southwick A.M."/>
            <person name="Wu H.C."/>
            <person name="Kim C.J."/>
            <person name="Nguyen M."/>
            <person name="Pham P.K."/>
            <person name="Cheuk R.F."/>
            <person name="Karlin-Newmann G."/>
            <person name="Liu S.X."/>
            <person name="Lam B."/>
            <person name="Sakano H."/>
            <person name="Wu T."/>
            <person name="Yu G."/>
            <person name="Miranda M."/>
            <person name="Quach H.L."/>
            <person name="Tripp M."/>
            <person name="Chang C.H."/>
            <person name="Lee J.M."/>
            <person name="Toriumi M.J."/>
            <person name="Chan M.M."/>
            <person name="Tang C.C."/>
            <person name="Onodera C.S."/>
            <person name="Deng J.M."/>
            <person name="Akiyama K."/>
            <person name="Ansari Y."/>
            <person name="Arakawa T."/>
            <person name="Banh J."/>
            <person name="Banno F."/>
            <person name="Bowser L."/>
            <person name="Brooks S.Y."/>
            <person name="Carninci P."/>
            <person name="Chao Q."/>
            <person name="Choy N."/>
            <person name="Enju A."/>
            <person name="Goldsmith A.D."/>
            <person name="Gurjal M."/>
            <person name="Hansen N.F."/>
            <person name="Hayashizaki Y."/>
            <person name="Johnson-Hopson C."/>
            <person name="Hsuan V.W."/>
            <person name="Iida K."/>
            <person name="Karnes M."/>
            <person name="Khan S."/>
            <person name="Koesema E."/>
            <person name="Ishida J."/>
            <person name="Jiang P.X."/>
            <person name="Jones T."/>
            <person name="Kawai J."/>
            <person name="Kamiya A."/>
            <person name="Meyers C."/>
            <person name="Nakajima M."/>
            <person name="Narusaka M."/>
            <person name="Seki M."/>
            <person name="Sakurai T."/>
            <person name="Satou M."/>
            <person name="Tamse R."/>
            <person name="Vaysberg M."/>
            <person name="Wallender E.K."/>
            <person name="Wong C."/>
            <person name="Yamamura Y."/>
            <person name="Yuan S."/>
            <person name="Shinozaki K."/>
            <person name="Davis R.W."/>
            <person name="Theologis A."/>
            <person name="Ecker J.R."/>
        </authorList>
    </citation>
    <scope>NUCLEOTIDE SEQUENCE [LARGE SCALE MRNA]</scope>
    <source>
        <strain>cv. Columbia</strain>
    </source>
</reference>
<reference key="4">
    <citation type="submission" date="2002-03" db="EMBL/GenBank/DDBJ databases">
        <title>Full-length cDNA from Arabidopsis thaliana.</title>
        <authorList>
            <person name="Brover V.V."/>
            <person name="Troukhan M.E."/>
            <person name="Alexandrov N.A."/>
            <person name="Lu Y.-P."/>
            <person name="Flavell R.B."/>
            <person name="Feldmann K.A."/>
        </authorList>
    </citation>
    <scope>NUCLEOTIDE SEQUENCE [LARGE SCALE MRNA]</scope>
</reference>
<reference key="5">
    <citation type="journal article" date="2002" name="Genome Biol.">
        <title>From genome to function: the Arabidopsis aquaporins.</title>
        <authorList>
            <person name="Quigley F."/>
            <person name="Rosenberg J.M."/>
            <person name="Shachar-Hill Y."/>
            <person name="Bohnert H.J."/>
        </authorList>
    </citation>
    <scope>NOMENCLATURE</scope>
    <scope>TISSUE SPECIFICITY</scope>
</reference>
<reference key="6">
    <citation type="journal article" date="2004" name="Mol. Cell. Proteomics">
        <title>Identification of new intrinsic proteins in Arabidopsis plasma membrane proteome.</title>
        <authorList>
            <person name="Marmagne A."/>
            <person name="Rouet M.-A."/>
            <person name="Ferro M."/>
            <person name="Rolland N."/>
            <person name="Alcon C."/>
            <person name="Joyard J."/>
            <person name="Garin J."/>
            <person name="Barbier-Brygoo H."/>
            <person name="Ephritikhine G."/>
        </authorList>
    </citation>
    <scope>IDENTIFICATION BY MASS SPECTROMETRY</scope>
    <scope>SUBCELLULAR LOCATION [LARGE SCALE ANALYSIS]</scope>
</reference>
<name>PIP15_ARATH</name>
<accession>Q8LAA6</accession>
<accession>O81736</accession>
<evidence type="ECO:0000250" key="1"/>
<evidence type="ECO:0000250" key="2">
    <source>
        <dbReference type="UniProtKB" id="P43286"/>
    </source>
</evidence>
<evidence type="ECO:0000250" key="3">
    <source>
        <dbReference type="UniProtKB" id="P61837"/>
    </source>
</evidence>
<evidence type="ECO:0000255" key="4"/>
<evidence type="ECO:0000256" key="5">
    <source>
        <dbReference type="SAM" id="MobiDB-lite"/>
    </source>
</evidence>
<evidence type="ECO:0000269" key="6">
    <source>
    </source>
</evidence>
<evidence type="ECO:0000269" key="7">
    <source>
    </source>
</evidence>
<evidence type="ECO:0000305" key="8"/>
<keyword id="KW-0007">Acetylation</keyword>
<keyword id="KW-1003">Cell membrane</keyword>
<keyword id="KW-0472">Membrane</keyword>
<keyword id="KW-0597">Phosphoprotein</keyword>
<keyword id="KW-1185">Reference proteome</keyword>
<keyword id="KW-0677">Repeat</keyword>
<keyword id="KW-0812">Transmembrane</keyword>
<keyword id="KW-1133">Transmembrane helix</keyword>
<keyword id="KW-0813">Transport</keyword>
<dbReference type="EMBL" id="AL031326">
    <property type="protein sequence ID" value="CAA20461.1"/>
    <property type="molecule type" value="Genomic_DNA"/>
</dbReference>
<dbReference type="EMBL" id="AL161559">
    <property type="protein sequence ID" value="CAB79295.1"/>
    <property type="molecule type" value="Genomic_DNA"/>
</dbReference>
<dbReference type="EMBL" id="CP002687">
    <property type="protein sequence ID" value="AEE84748.1"/>
    <property type="molecule type" value="Genomic_DNA"/>
</dbReference>
<dbReference type="EMBL" id="AY059948">
    <property type="protein sequence ID" value="AAL24430.1"/>
    <property type="molecule type" value="mRNA"/>
</dbReference>
<dbReference type="EMBL" id="AY081593">
    <property type="protein sequence ID" value="AAM10155.1"/>
    <property type="molecule type" value="mRNA"/>
</dbReference>
<dbReference type="EMBL" id="AY087945">
    <property type="protein sequence ID" value="AAM65493.1"/>
    <property type="molecule type" value="mRNA"/>
</dbReference>
<dbReference type="PIR" id="T05378">
    <property type="entry name" value="T05378"/>
</dbReference>
<dbReference type="RefSeq" id="NP_194071.1">
    <property type="nucleotide sequence ID" value="NM_118469.4"/>
</dbReference>
<dbReference type="SMR" id="Q8LAA6"/>
<dbReference type="BioGRID" id="13728">
    <property type="interactions" value="99"/>
</dbReference>
<dbReference type="FunCoup" id="Q8LAA6">
    <property type="interactions" value="169"/>
</dbReference>
<dbReference type="IntAct" id="Q8LAA6">
    <property type="interactions" value="93"/>
</dbReference>
<dbReference type="STRING" id="3702.Q8LAA6"/>
<dbReference type="MetOSite" id="Q8LAA6"/>
<dbReference type="PaxDb" id="3702-AT4G23400.1"/>
<dbReference type="ProteomicsDB" id="236760"/>
<dbReference type="EnsemblPlants" id="AT4G23400.1">
    <property type="protein sequence ID" value="AT4G23400.1"/>
    <property type="gene ID" value="AT4G23400"/>
</dbReference>
<dbReference type="GeneID" id="828439"/>
<dbReference type="Gramene" id="AT4G23400.1">
    <property type="protein sequence ID" value="AT4G23400.1"/>
    <property type="gene ID" value="AT4G23400"/>
</dbReference>
<dbReference type="KEGG" id="ath:AT4G23400"/>
<dbReference type="Araport" id="AT4G23400"/>
<dbReference type="TAIR" id="AT4G23400">
    <property type="gene designation" value="PIP1"/>
</dbReference>
<dbReference type="eggNOG" id="KOG0223">
    <property type="taxonomic scope" value="Eukaryota"/>
</dbReference>
<dbReference type="HOGENOM" id="CLU_020019_3_0_1"/>
<dbReference type="InParanoid" id="Q8LAA6"/>
<dbReference type="OMA" id="VANHWNH"/>
<dbReference type="OrthoDB" id="3222at2759"/>
<dbReference type="PhylomeDB" id="Q8LAA6"/>
<dbReference type="PRO" id="PR:Q8LAA6"/>
<dbReference type="Proteomes" id="UP000006548">
    <property type="component" value="Chromosome 4"/>
</dbReference>
<dbReference type="ExpressionAtlas" id="Q8LAA6">
    <property type="expression patterns" value="baseline and differential"/>
</dbReference>
<dbReference type="GO" id="GO:0005829">
    <property type="term" value="C:cytosol"/>
    <property type="evidence" value="ECO:0007005"/>
    <property type="project" value="TAIR"/>
</dbReference>
<dbReference type="GO" id="GO:0005886">
    <property type="term" value="C:plasma membrane"/>
    <property type="evidence" value="ECO:0007005"/>
    <property type="project" value="TAIR"/>
</dbReference>
<dbReference type="GO" id="GO:0009506">
    <property type="term" value="C:plasmodesma"/>
    <property type="evidence" value="ECO:0007005"/>
    <property type="project" value="TAIR"/>
</dbReference>
<dbReference type="GO" id="GO:0015250">
    <property type="term" value="F:water channel activity"/>
    <property type="evidence" value="ECO:0000250"/>
    <property type="project" value="TAIR"/>
</dbReference>
<dbReference type="CDD" id="cd00333">
    <property type="entry name" value="MIP"/>
    <property type="match status" value="1"/>
</dbReference>
<dbReference type="FunFam" id="1.20.1080.10:FF:000001">
    <property type="entry name" value="Probable aquaporin PIP1-2"/>
    <property type="match status" value="1"/>
</dbReference>
<dbReference type="Gene3D" id="1.20.1080.10">
    <property type="entry name" value="Glycerol uptake facilitator protein"/>
    <property type="match status" value="1"/>
</dbReference>
<dbReference type="InterPro" id="IPR023271">
    <property type="entry name" value="Aquaporin-like"/>
</dbReference>
<dbReference type="InterPro" id="IPR034294">
    <property type="entry name" value="Aquaporin_transptr"/>
</dbReference>
<dbReference type="InterPro" id="IPR000425">
    <property type="entry name" value="MIP"/>
</dbReference>
<dbReference type="InterPro" id="IPR022357">
    <property type="entry name" value="MIP_CS"/>
</dbReference>
<dbReference type="NCBIfam" id="TIGR00861">
    <property type="entry name" value="MIP"/>
    <property type="match status" value="1"/>
</dbReference>
<dbReference type="PANTHER" id="PTHR45687">
    <property type="entry name" value="AQUAPORIN OR AQUAGLYCEROPORIN RELATED"/>
    <property type="match status" value="1"/>
</dbReference>
<dbReference type="Pfam" id="PF00230">
    <property type="entry name" value="MIP"/>
    <property type="match status" value="1"/>
</dbReference>
<dbReference type="PRINTS" id="PR00783">
    <property type="entry name" value="MINTRINSICP"/>
</dbReference>
<dbReference type="SUPFAM" id="SSF81338">
    <property type="entry name" value="Aquaporin-like"/>
    <property type="match status" value="1"/>
</dbReference>
<dbReference type="PROSITE" id="PS00221">
    <property type="entry name" value="MIP"/>
    <property type="match status" value="1"/>
</dbReference>
<gene>
    <name type="primary">PIP1-5</name>
    <name type="synonym">PIP1D</name>
    <name type="ordered locus">At4g23400</name>
    <name type="ORF">F16G20.100</name>
</gene>